<feature type="chain" id="PRO_0000168516" description="DNA-binding protein StpA">
    <location>
        <begin position="1"/>
        <end position="133"/>
    </location>
</feature>
<feature type="DNA-binding region" evidence="1">
    <location>
        <begin position="111"/>
        <end position="116"/>
    </location>
</feature>
<feature type="region of interest" description="Disordered" evidence="3">
    <location>
        <begin position="81"/>
        <end position="115"/>
    </location>
</feature>
<feature type="compositionally biased region" description="Basic residues" evidence="3">
    <location>
        <begin position="85"/>
        <end position="95"/>
    </location>
</feature>
<proteinExistence type="inferred from homology"/>
<name>STPA_SALTY</name>
<dbReference type="EMBL" id="AF009363">
    <property type="protein sequence ID" value="AAB63588.1"/>
    <property type="molecule type" value="Genomic_DNA"/>
</dbReference>
<dbReference type="EMBL" id="AE006468">
    <property type="protein sequence ID" value="AAL21684.1"/>
    <property type="molecule type" value="Genomic_DNA"/>
</dbReference>
<dbReference type="RefSeq" id="NP_461725.1">
    <property type="nucleotide sequence ID" value="NC_003197.2"/>
</dbReference>
<dbReference type="RefSeq" id="WP_001051100.1">
    <property type="nucleotide sequence ID" value="NC_003197.2"/>
</dbReference>
<dbReference type="SMR" id="P0A1S4"/>
<dbReference type="STRING" id="99287.STM2799"/>
<dbReference type="PaxDb" id="99287-STM2799"/>
<dbReference type="GeneID" id="1254322"/>
<dbReference type="KEGG" id="stm:STM2799"/>
<dbReference type="PATRIC" id="fig|99287.12.peg.2955"/>
<dbReference type="HOGENOM" id="CLU_117503_0_0_6"/>
<dbReference type="OMA" id="NTWLELM"/>
<dbReference type="PhylomeDB" id="P0A1S4"/>
<dbReference type="BioCyc" id="SENT99287:STM2799-MONOMER"/>
<dbReference type="Proteomes" id="UP000001014">
    <property type="component" value="Chromosome"/>
</dbReference>
<dbReference type="GO" id="GO:0005829">
    <property type="term" value="C:cytosol"/>
    <property type="evidence" value="ECO:0000318"/>
    <property type="project" value="GO_Central"/>
</dbReference>
<dbReference type="GO" id="GO:0009295">
    <property type="term" value="C:nucleoid"/>
    <property type="evidence" value="ECO:0007669"/>
    <property type="project" value="UniProtKB-SubCell"/>
</dbReference>
<dbReference type="GO" id="GO:0032993">
    <property type="term" value="C:protein-DNA complex"/>
    <property type="evidence" value="ECO:0000318"/>
    <property type="project" value="GO_Central"/>
</dbReference>
<dbReference type="GO" id="GO:0003681">
    <property type="term" value="F:bent DNA binding"/>
    <property type="evidence" value="ECO:0000318"/>
    <property type="project" value="GO_Central"/>
</dbReference>
<dbReference type="GO" id="GO:0001217">
    <property type="term" value="F:DNA-binding transcription repressor activity"/>
    <property type="evidence" value="ECO:0000318"/>
    <property type="project" value="GO_Central"/>
</dbReference>
<dbReference type="GO" id="GO:0003680">
    <property type="term" value="F:minor groove of adenine-thymine-rich DNA binding"/>
    <property type="evidence" value="ECO:0000318"/>
    <property type="project" value="GO_Central"/>
</dbReference>
<dbReference type="GO" id="GO:0046983">
    <property type="term" value="F:protein dimerization activity"/>
    <property type="evidence" value="ECO:0007669"/>
    <property type="project" value="InterPro"/>
</dbReference>
<dbReference type="GO" id="GO:0030527">
    <property type="term" value="F:structural constituent of chromatin"/>
    <property type="evidence" value="ECO:0007669"/>
    <property type="project" value="InterPro"/>
</dbReference>
<dbReference type="GO" id="GO:0000976">
    <property type="term" value="F:transcription cis-regulatory region binding"/>
    <property type="evidence" value="ECO:0000318"/>
    <property type="project" value="GO_Central"/>
</dbReference>
<dbReference type="FunFam" id="1.10.287.1050:FF:000001">
    <property type="entry name" value="DNA-binding protein"/>
    <property type="match status" value="1"/>
</dbReference>
<dbReference type="FunFam" id="4.10.430.10:FF:000001">
    <property type="entry name" value="DNA-binding protein"/>
    <property type="match status" value="1"/>
</dbReference>
<dbReference type="Gene3D" id="1.10.287.1050">
    <property type="entry name" value="H-NS histone-like proteins"/>
    <property type="match status" value="1"/>
</dbReference>
<dbReference type="Gene3D" id="4.10.430.10">
    <property type="entry name" value="Histone-like protein H-NS, C-terminal domain"/>
    <property type="match status" value="1"/>
</dbReference>
<dbReference type="InterPro" id="IPR054180">
    <property type="entry name" value="H-NS-like_N"/>
</dbReference>
<dbReference type="InterPro" id="IPR027444">
    <property type="entry name" value="H-NS_C_dom"/>
</dbReference>
<dbReference type="InterPro" id="IPR037150">
    <property type="entry name" value="H-NS_C_dom_sf"/>
</dbReference>
<dbReference type="InterPro" id="IPR001801">
    <property type="entry name" value="Histone_HNS"/>
</dbReference>
<dbReference type="InterPro" id="IPR027454">
    <property type="entry name" value="Histone_HNS_N"/>
</dbReference>
<dbReference type="NCBIfam" id="NF007656">
    <property type="entry name" value="PRK10328.1"/>
    <property type="match status" value="1"/>
</dbReference>
<dbReference type="PANTHER" id="PTHR38097">
    <property type="match status" value="1"/>
</dbReference>
<dbReference type="PANTHER" id="PTHR38097:SF2">
    <property type="entry name" value="DNA-BINDING PROTEIN STPA"/>
    <property type="match status" value="1"/>
</dbReference>
<dbReference type="Pfam" id="PF00816">
    <property type="entry name" value="Histone_HNS"/>
    <property type="match status" value="1"/>
</dbReference>
<dbReference type="Pfam" id="PF22470">
    <property type="entry name" value="Histone_HNS_N"/>
    <property type="match status" value="1"/>
</dbReference>
<dbReference type="PIRSF" id="PIRSF002096">
    <property type="entry name" value="HnS"/>
    <property type="match status" value="1"/>
</dbReference>
<dbReference type="SMART" id="SM00528">
    <property type="entry name" value="HNS"/>
    <property type="match status" value="1"/>
</dbReference>
<dbReference type="SUPFAM" id="SSF81273">
    <property type="entry name" value="H-NS histone-like proteins"/>
    <property type="match status" value="2"/>
</dbReference>
<protein>
    <recommendedName>
        <fullName>DNA-binding protein StpA</fullName>
    </recommendedName>
    <alternativeName>
        <fullName>H-NS homolog StpA</fullName>
    </alternativeName>
</protein>
<comment type="function">
    <text evidence="2">A DNA-binding protein that acts in a fashion similar to H-NS, repressing gene transcription. A subset of H-NS/StpA-regulated genes require auxillary proteins for repression; these auxillary proteins (Hha and other similar proteins) may also modulate oligomerization of the H-NS/StpA complex (By similarity).</text>
</comment>
<comment type="subunit">
    <text evidence="2">Forms homodimers, can interact with H-NS.</text>
</comment>
<comment type="subcellular location">
    <subcellularLocation>
        <location evidence="2">Cytoplasm</location>
        <location evidence="2">Nucleoid</location>
    </subcellularLocation>
</comment>
<comment type="similarity">
    <text evidence="4">Belongs to the histone-like protein H-NS family.</text>
</comment>
<accession>P0A1S4</accession>
<accession>O33800</accession>
<keyword id="KW-0963">Cytoplasm</keyword>
<keyword id="KW-0238">DNA-binding</keyword>
<keyword id="KW-1185">Reference proteome</keyword>
<evidence type="ECO:0000250" key="1">
    <source>
        <dbReference type="UniProtKB" id="P0A1S2"/>
    </source>
</evidence>
<evidence type="ECO:0000250" key="2">
    <source>
        <dbReference type="UniProtKB" id="P0ACG1"/>
    </source>
</evidence>
<evidence type="ECO:0000256" key="3">
    <source>
        <dbReference type="SAM" id="MobiDB-lite"/>
    </source>
</evidence>
<evidence type="ECO:0000305" key="4"/>
<sequence>MNLMLQNLNNIRTLRAMAREFSIDVLEEMLEKFRVVTKERREEEELQQRQLAEKQEKINAFLELMKADGINPEELFAMDSAMPRSAKKRQPRPAKYRFTDFNGEEKTWTGQGRTPKPIAQALAAGKSLDDFLI</sequence>
<gene>
    <name type="primary">stpA</name>
    <name type="ordered locus">STM2799</name>
</gene>
<organism>
    <name type="scientific">Salmonella typhimurium (strain LT2 / SGSC1412 / ATCC 700720)</name>
    <dbReference type="NCBI Taxonomy" id="99287"/>
    <lineage>
        <taxon>Bacteria</taxon>
        <taxon>Pseudomonadati</taxon>
        <taxon>Pseudomonadota</taxon>
        <taxon>Gammaproteobacteria</taxon>
        <taxon>Enterobacterales</taxon>
        <taxon>Enterobacteriaceae</taxon>
        <taxon>Salmonella</taxon>
    </lineage>
</organism>
<reference key="1">
    <citation type="submission" date="1997-06" db="EMBL/GenBank/DDBJ databases">
        <authorList>
            <person name="Sonnenfield J.M."/>
            <person name="Raupach B."/>
            <person name="Falkow S."/>
            <person name="Higgins C.F."/>
            <person name="Hinton J.C.D."/>
        </authorList>
    </citation>
    <scope>NUCLEOTIDE SEQUENCE [GENOMIC DNA]</scope>
    <source>
        <strain>LT2</strain>
    </source>
</reference>
<reference key="2">
    <citation type="journal article" date="2001" name="Nature">
        <title>Complete genome sequence of Salmonella enterica serovar Typhimurium LT2.</title>
        <authorList>
            <person name="McClelland M."/>
            <person name="Sanderson K.E."/>
            <person name="Spieth J."/>
            <person name="Clifton S.W."/>
            <person name="Latreille P."/>
            <person name="Courtney L."/>
            <person name="Porwollik S."/>
            <person name="Ali J."/>
            <person name="Dante M."/>
            <person name="Du F."/>
            <person name="Hou S."/>
            <person name="Layman D."/>
            <person name="Leonard S."/>
            <person name="Nguyen C."/>
            <person name="Scott K."/>
            <person name="Holmes A."/>
            <person name="Grewal N."/>
            <person name="Mulvaney E."/>
            <person name="Ryan E."/>
            <person name="Sun H."/>
            <person name="Florea L."/>
            <person name="Miller W."/>
            <person name="Stoneking T."/>
            <person name="Nhan M."/>
            <person name="Waterston R."/>
            <person name="Wilson R.K."/>
        </authorList>
    </citation>
    <scope>NUCLEOTIDE SEQUENCE [LARGE SCALE GENOMIC DNA]</scope>
    <source>
        <strain>LT2 / SGSC1412 / ATCC 700720</strain>
    </source>
</reference>